<sequence>MEHAVAPCVLYPGTEPGAAGESESEGAASPAQTPCSLGASLCFSSGEESPPQSLASAAEGAATSPPSSGGPRVVERQWEAGSAGAASPEELASPEERACPEEPAAPSPEPRVWLEDPASPEEPGEPAPVPPGFGAVYGEPDLVLEVSGRRLRAHKAVLAARSDYFRARASRDVLRVQGVSLTALRLLLADAYSGRMAGVRPDNVAEVVAGARRLQLPGAAQRATDAVGPQLSLANCYEVLSAAKRQRLNELRDAAYCFMSDHYLEVLREPAVFGRLSGAERDLLLRRRLRAGRAHLLAAALGPAGERAGSRPQSPSGDADARGDAAVYCFHAAAGEWRELTRLPEGAPARGCGLCVLYNYLFVAGGVAPAGPDGRARPSDQVFCYNPATDSWSAVRPLRQARSQLRLLALDGHLYAVGGECLLSVERYDPRADRWAPVAPLPRGAFAVAHEATTCHGEIYVSGGSLFYRLLKYDPRRDEWQECPCSSSRERSADMVALDGFIYRFDLSGSRGEAQAAGPSGVSVSRYHCLAKQWSPCVAPLRLPGGPTGLQPFRCAALDGAIYCVSRAGTWRFQPAREGEAGGDAGQGGGFEALGAPLDVRGVLIPFALSLPEKPPRGEQGAP</sequence>
<protein>
    <recommendedName>
        <fullName>Kelch repeat and BTB domain-containing protein 11</fullName>
    </recommendedName>
    <alternativeName>
        <fullName>Chronic myelogenous leukemia-associated protein</fullName>
    </alternativeName>
    <alternativeName>
        <fullName>Kelch domain-containing protein 7B</fullName>
    </alternativeName>
</protein>
<dbReference type="EMBL" id="AY762229">
    <property type="protein sequence ID" value="AAW83120.1"/>
    <property type="molecule type" value="mRNA"/>
</dbReference>
<dbReference type="EMBL" id="AB018254">
    <property type="protein sequence ID" value="BAA34431.2"/>
    <property type="status" value="ALT_INIT"/>
    <property type="molecule type" value="mRNA"/>
</dbReference>
<dbReference type="EMBL" id="CH471181">
    <property type="protein sequence ID" value="EAW51487.1"/>
    <property type="molecule type" value="Genomic_DNA"/>
</dbReference>
<dbReference type="CCDS" id="CCDS34795.1"/>
<dbReference type="RefSeq" id="NP_055682.1">
    <property type="nucleotide sequence ID" value="NM_014867.3"/>
</dbReference>
<dbReference type="RefSeq" id="XP_011533073.1">
    <property type="nucleotide sequence ID" value="XM_011534771.2"/>
</dbReference>
<dbReference type="RefSeq" id="XP_011533074.1">
    <property type="nucleotide sequence ID" value="XM_011534772.3"/>
</dbReference>
<dbReference type="RefSeq" id="XP_016869603.1">
    <property type="nucleotide sequence ID" value="XM_017014114.1"/>
</dbReference>
<dbReference type="RefSeq" id="XP_016869604.1">
    <property type="nucleotide sequence ID" value="XM_017014115.1"/>
</dbReference>
<dbReference type="RefSeq" id="XP_016869605.1">
    <property type="nucleotide sequence ID" value="XM_017014116.2"/>
</dbReference>
<dbReference type="RefSeq" id="XP_016869606.1">
    <property type="nucleotide sequence ID" value="XM_017014117.1"/>
</dbReference>
<dbReference type="RefSeq" id="XP_054184816.1">
    <property type="nucleotide sequence ID" value="XM_054328841.1"/>
</dbReference>
<dbReference type="RefSeq" id="XP_054184817.1">
    <property type="nucleotide sequence ID" value="XM_054328842.1"/>
</dbReference>
<dbReference type="RefSeq" id="XP_054184818.1">
    <property type="nucleotide sequence ID" value="XM_054328843.1"/>
</dbReference>
<dbReference type="RefSeq" id="XP_054184819.1">
    <property type="nucleotide sequence ID" value="XM_054328844.1"/>
</dbReference>
<dbReference type="RefSeq" id="XP_054217615.1">
    <property type="nucleotide sequence ID" value="XM_054361640.1"/>
</dbReference>
<dbReference type="SMR" id="O94819"/>
<dbReference type="BioGRID" id="115248">
    <property type="interactions" value="5"/>
</dbReference>
<dbReference type="FunCoup" id="O94819">
    <property type="interactions" value="63"/>
</dbReference>
<dbReference type="IntAct" id="O94819">
    <property type="interactions" value="2"/>
</dbReference>
<dbReference type="STRING" id="9606.ENSP00000321544"/>
<dbReference type="iPTMnet" id="O94819"/>
<dbReference type="PhosphoSitePlus" id="O94819"/>
<dbReference type="SwissPalm" id="O94819"/>
<dbReference type="BioMuta" id="KBTBD11"/>
<dbReference type="jPOST" id="O94819"/>
<dbReference type="MassIVE" id="O94819"/>
<dbReference type="PaxDb" id="9606-ENSP00000321544"/>
<dbReference type="PeptideAtlas" id="O94819"/>
<dbReference type="ProteomicsDB" id="50462"/>
<dbReference type="Pumba" id="O94819"/>
<dbReference type="Antibodypedia" id="63434">
    <property type="antibodies" value="31 antibodies from 12 providers"/>
</dbReference>
<dbReference type="DNASU" id="9920"/>
<dbReference type="Ensembl" id="ENST00000320248.4">
    <property type="protein sequence ID" value="ENSP00000321544.3"/>
    <property type="gene ID" value="ENSG00000176595.4"/>
</dbReference>
<dbReference type="Ensembl" id="ENST00000617214.2">
    <property type="protein sequence ID" value="ENSP00000481889.1"/>
    <property type="gene ID" value="ENSG00000273645.2"/>
</dbReference>
<dbReference type="GeneID" id="9920"/>
<dbReference type="KEGG" id="hsa:9920"/>
<dbReference type="MANE-Select" id="ENST00000320248.4">
    <property type="protein sequence ID" value="ENSP00000321544.3"/>
    <property type="RefSeq nucleotide sequence ID" value="NM_014867.3"/>
    <property type="RefSeq protein sequence ID" value="NP_055682.1"/>
</dbReference>
<dbReference type="UCSC" id="uc003wpw.5">
    <property type="organism name" value="human"/>
</dbReference>
<dbReference type="AGR" id="HGNC:29104"/>
<dbReference type="CTD" id="9920"/>
<dbReference type="DisGeNET" id="9920"/>
<dbReference type="GeneCards" id="KBTBD11"/>
<dbReference type="HGNC" id="HGNC:29104">
    <property type="gene designation" value="KBTBD11"/>
</dbReference>
<dbReference type="HPA" id="ENSG00000176595">
    <property type="expression patterns" value="Tissue enhanced (brain)"/>
</dbReference>
<dbReference type="MIM" id="618794">
    <property type="type" value="gene"/>
</dbReference>
<dbReference type="neXtProt" id="NX_O94819"/>
<dbReference type="OpenTargets" id="ENSG00000176595"/>
<dbReference type="PharmGKB" id="PA142671642"/>
<dbReference type="VEuPathDB" id="HostDB:ENSG00000176595"/>
<dbReference type="eggNOG" id="KOG1072">
    <property type="taxonomic scope" value="Eukaryota"/>
</dbReference>
<dbReference type="GeneTree" id="ENSGT00940000161983"/>
<dbReference type="HOGENOM" id="CLU_020313_2_0_1"/>
<dbReference type="InParanoid" id="O94819"/>
<dbReference type="OMA" id="HAVAPCV"/>
<dbReference type="OrthoDB" id="45365at2759"/>
<dbReference type="PAN-GO" id="O94819">
    <property type="GO annotations" value="0 GO annotations based on evolutionary models"/>
</dbReference>
<dbReference type="PhylomeDB" id="O94819"/>
<dbReference type="TreeFam" id="TF328485"/>
<dbReference type="PathwayCommons" id="O94819"/>
<dbReference type="SignaLink" id="O94819"/>
<dbReference type="BioGRID-ORCS" id="9920">
    <property type="hits" value="19 hits in 1181 CRISPR screens"/>
</dbReference>
<dbReference type="CD-CODE" id="FB4E32DD">
    <property type="entry name" value="Presynaptic clusters and postsynaptic densities"/>
</dbReference>
<dbReference type="ChiTaRS" id="KBTBD11">
    <property type="organism name" value="human"/>
</dbReference>
<dbReference type="GenomeRNAi" id="9920"/>
<dbReference type="Pharos" id="O94819">
    <property type="development level" value="Tdark"/>
</dbReference>
<dbReference type="PRO" id="PR:O94819"/>
<dbReference type="Proteomes" id="UP000005640">
    <property type="component" value="Chromosome 8"/>
</dbReference>
<dbReference type="RNAct" id="O94819">
    <property type="molecule type" value="protein"/>
</dbReference>
<dbReference type="Bgee" id="ENSG00000176595">
    <property type="expression patterns" value="Expressed in cortical plate and 100 other cell types or tissues"/>
</dbReference>
<dbReference type="CDD" id="cd18484">
    <property type="entry name" value="BACK_KBTBD11_CMLAP"/>
    <property type="match status" value="1"/>
</dbReference>
<dbReference type="CDD" id="cd18275">
    <property type="entry name" value="BTB_POZ_KBTBD11"/>
    <property type="match status" value="1"/>
</dbReference>
<dbReference type="Gene3D" id="2.120.10.80">
    <property type="entry name" value="Kelch-type beta propeller"/>
    <property type="match status" value="1"/>
</dbReference>
<dbReference type="Gene3D" id="3.30.710.10">
    <property type="entry name" value="Potassium Channel Kv1.1, Chain A"/>
    <property type="match status" value="1"/>
</dbReference>
<dbReference type="InterPro" id="IPR000210">
    <property type="entry name" value="BTB/POZ_dom"/>
</dbReference>
<dbReference type="InterPro" id="IPR015915">
    <property type="entry name" value="Kelch-typ_b-propeller"/>
</dbReference>
<dbReference type="InterPro" id="IPR052310">
    <property type="entry name" value="Kelch/BTB_domain_protein"/>
</dbReference>
<dbReference type="InterPro" id="IPR006652">
    <property type="entry name" value="Kelch_1"/>
</dbReference>
<dbReference type="InterPro" id="IPR011333">
    <property type="entry name" value="SKP1/BTB/POZ_sf"/>
</dbReference>
<dbReference type="PANTHER" id="PTHR45972">
    <property type="entry name" value="BTB_2 DOMAIN-CONTAINING PROTEIN"/>
    <property type="match status" value="1"/>
</dbReference>
<dbReference type="PANTHER" id="PTHR45972:SF3">
    <property type="entry name" value="KELCH REPEAT AND BTB DOMAIN-CONTAINING PROTEIN 11"/>
    <property type="match status" value="1"/>
</dbReference>
<dbReference type="Pfam" id="PF00651">
    <property type="entry name" value="BTB"/>
    <property type="match status" value="1"/>
</dbReference>
<dbReference type="Pfam" id="PF01344">
    <property type="entry name" value="Kelch_1"/>
    <property type="match status" value="2"/>
</dbReference>
<dbReference type="SMART" id="SM00225">
    <property type="entry name" value="BTB"/>
    <property type="match status" value="1"/>
</dbReference>
<dbReference type="SMART" id="SM00612">
    <property type="entry name" value="Kelch"/>
    <property type="match status" value="3"/>
</dbReference>
<dbReference type="SUPFAM" id="SSF117281">
    <property type="entry name" value="Kelch motif"/>
    <property type="match status" value="1"/>
</dbReference>
<dbReference type="SUPFAM" id="SSF54695">
    <property type="entry name" value="POZ domain"/>
    <property type="match status" value="1"/>
</dbReference>
<dbReference type="PROSITE" id="PS50097">
    <property type="entry name" value="BTB"/>
    <property type="match status" value="1"/>
</dbReference>
<gene>
    <name type="primary">KBTBD11</name>
    <name type="synonym">CMLAP</name>
    <name type="synonym">KIAA0711</name>
    <name type="synonym">KLHDC7C</name>
</gene>
<name>KBTBB_HUMAN</name>
<feature type="chain" id="PRO_0000119090" description="Kelch repeat and BTB domain-containing protein 11">
    <location>
        <begin position="1"/>
        <end position="623"/>
    </location>
</feature>
<feature type="domain" description="BTB" evidence="2">
    <location>
        <begin position="140"/>
        <end position="196"/>
    </location>
</feature>
<feature type="repeat" description="Kelch 1">
    <location>
        <begin position="311"/>
        <end position="359"/>
    </location>
</feature>
<feature type="repeat" description="Kelch 2">
    <location>
        <begin position="360"/>
        <end position="412"/>
    </location>
</feature>
<feature type="repeat" description="Kelch 3">
    <location>
        <begin position="413"/>
        <end position="455"/>
    </location>
</feature>
<feature type="repeat" description="Kelch 4">
    <location>
        <begin position="458"/>
        <end position="500"/>
    </location>
</feature>
<feature type="region of interest" description="Disordered" evidence="3">
    <location>
        <begin position="1"/>
        <end position="129"/>
    </location>
</feature>
<feature type="compositionally biased region" description="Low complexity" evidence="3">
    <location>
        <begin position="12"/>
        <end position="31"/>
    </location>
</feature>
<feature type="compositionally biased region" description="Polar residues" evidence="3">
    <location>
        <begin position="42"/>
        <end position="55"/>
    </location>
</feature>
<feature type="compositionally biased region" description="Low complexity" evidence="3">
    <location>
        <begin position="79"/>
        <end position="91"/>
    </location>
</feature>
<feature type="modified residue" description="Phosphoserine" evidence="1">
    <location>
        <position position="64"/>
    </location>
</feature>
<feature type="modified residue" description="Phosphoserine" evidence="1">
    <location>
        <position position="67"/>
    </location>
</feature>
<feature type="modified residue" description="Phosphoserine" evidence="5">
    <location>
        <position position="87"/>
    </location>
</feature>
<feature type="modified residue" description="Phosphoserine" evidence="5">
    <location>
        <position position="107"/>
    </location>
</feature>
<evidence type="ECO:0000250" key="1">
    <source>
        <dbReference type="UniProtKB" id="Q8BNW9"/>
    </source>
</evidence>
<evidence type="ECO:0000255" key="2">
    <source>
        <dbReference type="PROSITE-ProRule" id="PRU00037"/>
    </source>
</evidence>
<evidence type="ECO:0000256" key="3">
    <source>
        <dbReference type="SAM" id="MobiDB-lite"/>
    </source>
</evidence>
<evidence type="ECO:0000305" key="4"/>
<evidence type="ECO:0007744" key="5">
    <source>
    </source>
</evidence>
<organism>
    <name type="scientific">Homo sapiens</name>
    <name type="common">Human</name>
    <dbReference type="NCBI Taxonomy" id="9606"/>
    <lineage>
        <taxon>Eukaryota</taxon>
        <taxon>Metazoa</taxon>
        <taxon>Chordata</taxon>
        <taxon>Craniata</taxon>
        <taxon>Vertebrata</taxon>
        <taxon>Euteleostomi</taxon>
        <taxon>Mammalia</taxon>
        <taxon>Eutheria</taxon>
        <taxon>Euarchontoglires</taxon>
        <taxon>Primates</taxon>
        <taxon>Haplorrhini</taxon>
        <taxon>Catarrhini</taxon>
        <taxon>Hominidae</taxon>
        <taxon>Homo</taxon>
    </lineage>
</organism>
<keyword id="KW-0880">Kelch repeat</keyword>
<keyword id="KW-0597">Phosphoprotein</keyword>
<keyword id="KW-1267">Proteomics identification</keyword>
<keyword id="KW-1185">Reference proteome</keyword>
<keyword id="KW-0677">Repeat</keyword>
<reference key="1">
    <citation type="submission" date="2004-09" db="EMBL/GenBank/DDBJ databases">
        <title>Homo sapiens chronic myelogenous leukemia associated protein.</title>
        <authorList>
            <person name="Li M."/>
            <person name="Liu Y."/>
            <person name="Cheng J."/>
            <person name="Liu Y."/>
            <person name="Peng W."/>
            <person name="Fu S."/>
            <person name="Cong Y."/>
        </authorList>
    </citation>
    <scope>NUCLEOTIDE SEQUENCE [MRNA]</scope>
</reference>
<reference key="2">
    <citation type="journal article" date="1998" name="DNA Res.">
        <title>Prediction of the coding sequences of unidentified human genes. XI. The complete sequences of 100 new cDNA clones from brain which code for large proteins in vitro.</title>
        <authorList>
            <person name="Nagase T."/>
            <person name="Ishikawa K."/>
            <person name="Suyama M."/>
            <person name="Kikuno R."/>
            <person name="Miyajima N."/>
            <person name="Tanaka A."/>
            <person name="Kotani H."/>
            <person name="Nomura N."/>
            <person name="Ohara O."/>
        </authorList>
    </citation>
    <scope>NUCLEOTIDE SEQUENCE [LARGE SCALE MRNA]</scope>
    <source>
        <tissue>Brain</tissue>
    </source>
</reference>
<reference key="3">
    <citation type="submission" date="2005-07" db="EMBL/GenBank/DDBJ databases">
        <authorList>
            <person name="Mural R.J."/>
            <person name="Istrail S."/>
            <person name="Sutton G.G."/>
            <person name="Florea L."/>
            <person name="Halpern A.L."/>
            <person name="Mobarry C.M."/>
            <person name="Lippert R."/>
            <person name="Walenz B."/>
            <person name="Shatkay H."/>
            <person name="Dew I."/>
            <person name="Miller J.R."/>
            <person name="Flanigan M.J."/>
            <person name="Edwards N.J."/>
            <person name="Bolanos R."/>
            <person name="Fasulo D."/>
            <person name="Halldorsson B.V."/>
            <person name="Hannenhalli S."/>
            <person name="Turner R."/>
            <person name="Yooseph S."/>
            <person name="Lu F."/>
            <person name="Nusskern D.R."/>
            <person name="Shue B.C."/>
            <person name="Zheng X.H."/>
            <person name="Zhong F."/>
            <person name="Delcher A.L."/>
            <person name="Huson D.H."/>
            <person name="Kravitz S.A."/>
            <person name="Mouchard L."/>
            <person name="Reinert K."/>
            <person name="Remington K.A."/>
            <person name="Clark A.G."/>
            <person name="Waterman M.S."/>
            <person name="Eichler E.E."/>
            <person name="Adams M.D."/>
            <person name="Hunkapiller M.W."/>
            <person name="Myers E.W."/>
            <person name="Venter J.C."/>
        </authorList>
    </citation>
    <scope>NUCLEOTIDE SEQUENCE [LARGE SCALE GENOMIC DNA]</scope>
</reference>
<reference key="4">
    <citation type="journal article" date="2009" name="Anal. Chem.">
        <title>Lys-N and trypsin cover complementary parts of the phosphoproteome in a refined SCX-based approach.</title>
        <authorList>
            <person name="Gauci S."/>
            <person name="Helbig A.O."/>
            <person name="Slijper M."/>
            <person name="Krijgsveld J."/>
            <person name="Heck A.J."/>
            <person name="Mohammed S."/>
        </authorList>
    </citation>
    <scope>IDENTIFICATION BY MASS SPECTROMETRY [LARGE SCALE ANALYSIS]</scope>
</reference>
<reference key="5">
    <citation type="journal article" date="2014" name="J. Proteomics">
        <title>An enzyme assisted RP-RPLC approach for in-depth analysis of human liver phosphoproteome.</title>
        <authorList>
            <person name="Bian Y."/>
            <person name="Song C."/>
            <person name="Cheng K."/>
            <person name="Dong M."/>
            <person name="Wang F."/>
            <person name="Huang J."/>
            <person name="Sun D."/>
            <person name="Wang L."/>
            <person name="Ye M."/>
            <person name="Zou H."/>
        </authorList>
    </citation>
    <scope>PHOSPHORYLATION [LARGE SCALE ANALYSIS] AT SER-87 AND SER-107</scope>
    <scope>IDENTIFICATION BY MASS SPECTROMETRY [LARGE SCALE ANALYSIS]</scope>
    <source>
        <tissue>Liver</tissue>
    </source>
</reference>
<proteinExistence type="evidence at protein level"/>
<accession>O94819</accession>
<accession>Q3L1I0</accession>
<comment type="sequence caution" evidence="4">
    <conflict type="erroneous initiation">
        <sequence resource="EMBL-CDS" id="BAA34431"/>
    </conflict>
</comment>